<protein>
    <recommendedName>
        <fullName>Transposase for transposon Tn5</fullName>
        <ecNumber>3.1.-.-</ecNumber>
    </recommendedName>
    <alternativeName>
        <fullName>Tnp</fullName>
    </alternativeName>
</protein>
<gene>
    <name type="primary">tnpA</name>
    <name type="synonym">tnp</name>
</gene>
<accession>Q46731</accession>
<accession>Q08JA5</accession>
<accession>Q47661</accession>
<accession>Q57460</accession>
<keyword id="KW-0002">3D-structure</keyword>
<keyword id="KW-0877">Alternative promoter usage</keyword>
<keyword id="KW-0903">Direct protein sequencing</keyword>
<keyword id="KW-0233">DNA recombination</keyword>
<keyword id="KW-0238">DNA-binding</keyword>
<keyword id="KW-0255">Endonuclease</keyword>
<keyword id="KW-0378">Hydrolase</keyword>
<keyword id="KW-0460">Magnesium</keyword>
<keyword id="KW-0479">Metal-binding</keyword>
<keyword id="KW-0540">Nuclease</keyword>
<keyword id="KW-0614">Plasmid</keyword>
<keyword id="KW-0814">Transposable element</keyword>
<keyword id="KW-0815">Transposition</keyword>
<name>TN5P_ECOLX</name>
<reference key="1">
    <citation type="journal article" date="1981" name="Cell">
        <title>The functional differences in the inverted repeats of Tn5 are caused by a single base pair nonhomology.</title>
        <authorList>
            <person name="Rothstein S.J."/>
            <person name="Reznikoff W.S."/>
        </authorList>
    </citation>
    <scope>NUCLEOTIDE SEQUENCE [GENOMIC DNA] (ISOFORMS 1 AND 2)</scope>
    <scope>FUNCTION</scope>
</reference>
<reference key="2">
    <citation type="journal article" date="1981" name="Cold Spring Harb. Symp. Quant. Biol.">
        <title>Structural analysis of Tn5.</title>
        <authorList>
            <person name="Auerswald E.A."/>
            <person name="Ludwig G."/>
            <person name="Schaller H."/>
        </authorList>
    </citation>
    <scope>NUCLEOTIDE SEQUENCE [GENOMIC DNA] (ISOFORMS 1 AND 2)</scope>
</reference>
<reference key="3">
    <citation type="journal article" date="1995" name="Gene">
        <title>The revised nucleotide sequence of Tn5.</title>
        <authorList>
            <person name="Ahmed A."/>
            <person name="Podemski L."/>
        </authorList>
    </citation>
    <scope>NUCLEOTIDE SEQUENCE [GENOMIC DNA] (ISOFORM 1)</scope>
</reference>
<reference key="4">
    <citation type="submission" date="2006-03" db="EMBL/GenBank/DDBJ databases">
        <title>pO86A1 is a Tn5-insert derivative of adherence plasmid pO86A in strain DIJ1.</title>
        <authorList>
            <person name="Yamamoto T."/>
        </authorList>
    </citation>
    <scope>NUCLEOTIDE SEQUENCE [GENOMIC DNA] (ISOFORM 1)</scope>
    <source>
        <strain>DIJ1</strain>
        <plasmid>pO86A1</plasmid>
    </source>
</reference>
<reference key="5">
    <citation type="journal article" date="1986" name="J. Mol. Biol.">
        <title>Transcriptional and translational initiation sites of IS50. Control of transposase and inhibitor expression.</title>
        <authorList>
            <person name="Krebs M.P."/>
            <person name="Reznikoff W.S."/>
        </authorList>
    </citation>
    <scope>PROTEIN SEQUENCE OF N-TERMINUS</scope>
    <scope>ALTERNATIVE PROMOTER USAGE</scope>
</reference>
<reference key="6">
    <citation type="journal article" date="1982" name="Cell">
        <title>Control of Tn5 transposition in Escherichia coli is mediated by protein from the right repeat.</title>
        <authorList>
            <person name="Johnson R.C."/>
            <person name="Yin J.C.P."/>
            <person name="Reznikoff W.S."/>
        </authorList>
    </citation>
    <scope>FUNCTION</scope>
</reference>
<reference key="7">
    <citation type="journal article" date="1983" name="Genetics">
        <title>A product of the Tn5 transposase gene inhibits transposition.</title>
        <authorList>
            <person name="Lowe J.B."/>
            <person name="Berg D.E."/>
        </authorList>
    </citation>
    <scope>FUNCTION</scope>
</reference>
<reference key="8">
    <citation type="journal article" date="1992" name="J. Bacteriol.">
        <title>Characterization of two hypertransposing Tn5 mutants.</title>
        <authorList>
            <person name="Wiegand T.W."/>
            <person name="Reznikoff W.S."/>
        </authorList>
    </citation>
    <scope>FUNCTION</scope>
    <scope>MUTAGENESIS OF MET-56; GLU-110 AND GLU-345</scope>
</reference>
<reference key="9">
    <citation type="journal article" date="1993" name="J. Bacteriol.">
        <title>Characterization of the Tn5 transposase and inhibitor proteins: a model for the inhibition of transposition.</title>
        <authorList>
            <person name="de la Cruz N.B."/>
            <person name="Weinreich M.D."/>
            <person name="Wiegand T.W."/>
            <person name="Krebs M.P."/>
            <person name="Reznikoff W.S."/>
        </authorList>
    </citation>
    <scope>FUNCTION</scope>
    <scope>SUBUNIT</scope>
</reference>
<reference key="10">
    <citation type="journal article" date="1996" name="Nucleic Acids Res.">
        <title>Purification and biochemical analyses of a monomeric form of Tn5 transposase.</title>
        <authorList>
            <person name="York D."/>
            <person name="Reznikoff W.S."/>
        </authorList>
    </citation>
    <scope>FUNCTION</scope>
    <scope>SUBUNIT</scope>
</reference>
<reference key="11">
    <citation type="journal article" date="1997" name="J. Mol. Biol.">
        <title>Tn5 transposase mutants that alter DNA binding specificity.</title>
        <authorList>
            <person name="Zhou M."/>
            <person name="Reznikoff W.S."/>
        </authorList>
    </citation>
    <scope>MUTAGENESIS OF TYR-41; THR-47 AND GLU-54</scope>
</reference>
<reference key="12">
    <citation type="journal article" date="2001" name="J. Biol. Chem.">
        <title>Functional characterization of arginine 30, lysine 40, and arginine 62 in Tn5 transposase.</title>
        <authorList>
            <person name="Twining S.S."/>
            <person name="Goryshin I.Y."/>
            <person name="Bhasin A."/>
            <person name="Reznikoff W.S."/>
        </authorList>
    </citation>
    <scope>MUTAGENESIS OF ARG-30; LYS-40 AND ARG-62</scope>
</reference>
<reference key="13">
    <citation type="journal article" date="2002" name="J. Biol. Chem.">
        <title>Tn5 transposase active site mutants.</title>
        <authorList>
            <person name="Naumann T.A."/>
            <person name="Reznikoff W.S."/>
        </authorList>
    </citation>
    <scope>FUNCTION</scope>
    <scope>MUTAGENESIS OF ASP-97; ASP-188; TYR-319; ARG-322; GLU-326; LYS-330 AND LYS-333</scope>
</reference>
<reference key="14">
    <citation type="journal article" date="2007" name="J. Bacteriol.">
        <title>Site-directed mutagenesis studies of Tn5 transposase residues involved in synaptic complex formation.</title>
        <authorList>
            <person name="Vaezeslami S."/>
            <person name="Sterling R."/>
            <person name="Reznikoff W.S."/>
        </authorList>
    </citation>
    <scope>MUTAGENESIS OF ARG-342; GLU-344; ASN-348; SER-438; LYS-439 AND SER-445</scope>
</reference>
<reference key="15">
    <citation type="journal article" date="2008" name="Annu. Rev. Genet.">
        <title>Transposon tn5.</title>
        <authorList>
            <person name="Reznikoff W.S."/>
        </authorList>
    </citation>
    <scope>REVIEW</scope>
</reference>
<reference key="16">
    <citation type="journal article" date="1999" name="J. Biol. Chem.">
        <title>The three-dimensional structure of a Tn5 transposase-related protein determined to 2.9-A resolution.</title>
        <authorList>
            <person name="Davies D.R."/>
            <person name="Mahnke Braam L."/>
            <person name="Reznikoff W.S."/>
            <person name="Rayment I."/>
        </authorList>
    </citation>
    <scope>X-RAY CRYSTALLOGRAPHY (2.9 ANGSTROMS) OF 56-476</scope>
</reference>
<reference key="17">
    <citation type="journal article" date="2000" name="Science">
        <title>Three-dimensional structure of the Tn5 synaptic complex transposition intermediate.</title>
        <authorList>
            <person name="Davies D.R."/>
            <person name="Goryshin I.Y."/>
            <person name="Reznikoff W.S."/>
            <person name="Rayment I."/>
        </authorList>
    </citation>
    <scope>X-RAY CRYSTALLOGRAPHY (2.3 ANGSTROMS) OF MUTANT LYS-54/ALA-56/PRO-372 IN COMPLEX WITH DNA AND MANGANESE IONS</scope>
    <scope>COFACTOR</scope>
    <scope>SUBUNIT</scope>
</reference>
<reference key="18">
    <citation type="journal article" date="2002" name="J. Mol. Biol.">
        <title>Evidence for 'unseen' transposase-DNA contacts.</title>
        <authorList>
            <person name="Steiniger-White M."/>
            <person name="Bhasin A."/>
            <person name="Lovell S."/>
            <person name="Rayment I."/>
            <person name="Reznikoff W.S."/>
        </authorList>
    </citation>
    <scope>X-RAY CRYSTALLOGRAPHY (2.8 ANGSTROMS) OF MUTANT LYS-54/ALA-56/LYS-345/PRO-372 IN COMPLEX WITH DNA AND MANGANESE IONS</scope>
    <scope>FUNCTION</scope>
</reference>
<reference key="19">
    <citation type="journal article" date="2002" name="Nat. Struct. Biol.">
        <title>Two-metal active site binding of a Tn5 transposase synaptic complex.</title>
        <authorList>
            <person name="Lovell S."/>
            <person name="Goryshin I.Y."/>
            <person name="Reznikoff W.R."/>
            <person name="Rayment I."/>
        </authorList>
    </citation>
    <scope>X-RAY CRYSTALLOGRAPHY (2.5 ANGSTROMS) OF MUTANT LYS-54/ALA-56/LYS-119/ALA-120/LYS-345/PRO-372 IN COMPLEX WITH MANGANESE IONS AND DNA</scope>
    <scope>COFACTOR</scope>
    <scope>SUBUNIT</scope>
</reference>
<reference key="20">
    <citation type="journal article" date="2004" name="Curr. Opin. Struct. Biol.">
        <title>Structure/function insights into Tn5 transposition.</title>
        <authorList>
            <person name="Steiniger-White M."/>
            <person name="Rayment I."/>
            <person name="Reznikoff W.S."/>
        </authorList>
    </citation>
    <scope>X-RAY CRYSTALLOGRAPHY (1.9 ANGSTROMS) OF MUTANT LYS-54/ALA-56/LYS-119/ALA-120/LYS-345/PRO-372 IN COMPLEX WITH DNA AND MANGANESE IONS</scope>
    <scope>SUBUNIT</scope>
    <scope>COFACTOR</scope>
</reference>
<feature type="chain" id="PRO_0000351545" description="Transposase for transposon Tn5">
    <location>
        <begin position="1"/>
        <end position="476"/>
    </location>
</feature>
<feature type="region of interest" description="Interaction with DNA">
    <location>
        <begin position="1"/>
        <end position="70"/>
    </location>
</feature>
<feature type="region of interest" description="Interaction with DNA">
    <location>
        <begin position="237"/>
        <end position="255"/>
    </location>
</feature>
<feature type="region of interest" description="Interaction with DNA">
    <location>
        <begin position="319"/>
        <end position="348"/>
    </location>
</feature>
<feature type="region of interest" description="Important for dimerization">
    <location>
        <begin position="369"/>
        <end position="476"/>
    </location>
</feature>
<feature type="binding site">
    <location>
        <position position="97"/>
    </location>
    <ligand>
        <name>Mg(2+)</name>
        <dbReference type="ChEBI" id="CHEBI:18420"/>
        <label>1</label>
    </ligand>
</feature>
<feature type="binding site">
    <location>
        <position position="97"/>
    </location>
    <ligand>
        <name>Mg(2+)</name>
        <dbReference type="ChEBI" id="CHEBI:18420"/>
        <label>2</label>
    </ligand>
</feature>
<feature type="binding site">
    <location>
        <position position="188"/>
    </location>
    <ligand>
        <name>Mg(2+)</name>
        <dbReference type="ChEBI" id="CHEBI:18420"/>
        <label>1</label>
    </ligand>
</feature>
<feature type="binding site">
    <location>
        <position position="326"/>
    </location>
    <ligand>
        <name>Mg(2+)</name>
        <dbReference type="ChEBI" id="CHEBI:18420"/>
        <label>2</label>
    </ligand>
</feature>
<feature type="site" description="Interaction with DNA">
    <location>
        <position position="210"/>
    </location>
</feature>
<feature type="site" description="Interaction with DNA">
    <location>
        <position position="298"/>
    </location>
</feature>
<feature type="splice variant" id="VSP_035522" description="In isoform 2." evidence="15">
    <location>
        <begin position="1"/>
        <end position="55"/>
    </location>
</feature>
<feature type="mutagenesis site" description="Loss of transposase activity." evidence="2">
    <original>R</original>
    <variation>Q</variation>
    <location>
        <position position="30"/>
    </location>
</feature>
<feature type="mutagenesis site" description="Strongly reduced transposase activity." evidence="2">
    <original>K</original>
    <variation>Q</variation>
    <location>
        <position position="40"/>
    </location>
</feature>
<feature type="mutagenesis site" description="Enhances interaction with DNA and increases transposition frequency." evidence="14">
    <original>Y</original>
    <variation>H</variation>
    <location>
        <position position="41"/>
    </location>
</feature>
<feature type="mutagenesis site" description="Enhances interaction with DNA and increases transposition frequency." evidence="14">
    <original>T</original>
    <variation>P</variation>
    <location>
        <position position="47"/>
    </location>
</feature>
<feature type="mutagenesis site" description="Enhances interaction with DNA and increases transposition frequency." evidence="14">
    <original>E</original>
    <variation>K</variation>
    <variation>V</variation>
    <location>
        <position position="54"/>
    </location>
</feature>
<feature type="mutagenesis site" description="Abolishes expression of the transposase inhibitor Inh (isoform 2)." evidence="6">
    <original>M</original>
    <variation>A</variation>
    <location>
        <position position="56"/>
    </location>
</feature>
<feature type="mutagenesis site" description="Loss of transposase activity." evidence="2">
    <original>R</original>
    <variation>Q</variation>
    <location>
        <position position="62"/>
    </location>
</feature>
<feature type="mutagenesis site" description="Loss of transposase activity." evidence="3">
    <original>D</original>
    <variation>A</variation>
    <location>
        <position position="97"/>
    </location>
</feature>
<feature type="mutagenesis site" description="Enhances transposase activity." evidence="6">
    <original>E</original>
    <variation>K</variation>
    <location>
        <position position="110"/>
    </location>
</feature>
<feature type="mutagenesis site" description="Loss of transposase activity." evidence="3">
    <original>D</original>
    <variation>A</variation>
    <location>
        <position position="188"/>
    </location>
</feature>
<feature type="mutagenesis site" description="Loss of strand transfer activity." evidence="3">
    <original>Y</original>
    <variation>A</variation>
    <location>
        <position position="319"/>
    </location>
</feature>
<feature type="mutagenesis site" description="Loss of strand transfer activity." evidence="3">
    <original>R</original>
    <variation>A</variation>
    <variation>K</variation>
    <location>
        <position position="322"/>
    </location>
</feature>
<feature type="mutagenesis site" description="Strongly reduced strand transfer activity." evidence="3">
    <original>R</original>
    <variation>Q</variation>
    <location>
        <position position="322"/>
    </location>
</feature>
<feature type="mutagenesis site" description="Loss of transposase activity." evidence="3">
    <original>E</original>
    <variation>A</variation>
    <location>
        <position position="326"/>
    </location>
</feature>
<feature type="mutagenesis site" description="Reduced transposase activity." evidence="3">
    <original>K</original>
    <variation>A</variation>
    <location>
        <position position="330"/>
    </location>
</feature>
<feature type="mutagenesis site" description="No effect." evidence="3">
    <original>K</original>
    <variation>R</variation>
    <location>
        <position position="330"/>
    </location>
</feature>
<feature type="mutagenesis site" description="Strongly reduced DNA cleavage. Loss of strand transfer activity." evidence="3">
    <original>K</original>
    <variation>A</variation>
    <variation>R</variation>
    <location>
        <position position="333"/>
    </location>
</feature>
<feature type="mutagenesis site" description="Abolishes formation of the synaptic complex and transposition." evidence="8">
    <original>R</original>
    <variation>A</variation>
    <location>
        <position position="342"/>
    </location>
</feature>
<feature type="mutagenesis site" description="Enhances transposase activity." evidence="8">
    <original>E</original>
    <variation>A</variation>
    <location>
        <position position="344"/>
    </location>
</feature>
<feature type="mutagenesis site" description="Enhances transposase activity." evidence="6">
    <original>E</original>
    <variation>K</variation>
    <location>
        <position position="345"/>
    </location>
</feature>
<feature type="mutagenesis site" description="Reduces formation of synaptic complex and transposition." evidence="8">
    <original>N</original>
    <variation>A</variation>
    <location>
        <position position="348"/>
    </location>
</feature>
<feature type="mutagenesis site" description="Enhances transposase activity.">
    <original>L</original>
    <variation>P</variation>
    <location>
        <position position="372"/>
    </location>
</feature>
<feature type="mutagenesis site" description="Abolishes formation of the synaptic complex and transposition." evidence="8">
    <original>S</original>
    <variation>A</variation>
    <location>
        <position position="438"/>
    </location>
</feature>
<feature type="mutagenesis site" description="Abolishes formation of synaptic complex and transposition." evidence="8">
    <original>K</original>
    <variation>A</variation>
    <location>
        <position position="439"/>
    </location>
</feature>
<feature type="mutagenesis site" description="Reduces formation of synaptic complex and transposition." evidence="8">
    <original>S</original>
    <variation>A</variation>
    <location>
        <position position="445"/>
    </location>
</feature>
<feature type="mutagenesis site" description="Abolishes formation of the synaptic complex and transposition.">
    <original>G</original>
    <variation>D</variation>
    <location>
        <position position="462"/>
    </location>
</feature>
<feature type="mutagenesis site" description="Abolishes formation of the synaptic complex and transposition.">
    <original>A</original>
    <variation>D</variation>
    <location>
        <position position="466"/>
    </location>
</feature>
<feature type="sequence conflict" description="In Ref. 1; AAA73393/AAA73394 and 2; CAA23891." evidence="15" ref="1 2">
    <original>I</original>
    <variation>Y</variation>
    <location>
        <position position="64"/>
    </location>
</feature>
<feature type="sequence conflict" description="In Ref. 1; AAA73393/AAA73394 and 2; CAA23891." evidence="15" ref="1 2">
    <original>K</original>
    <variation>R</variation>
    <location>
        <position position="200"/>
    </location>
</feature>
<feature type="sequence conflict" description="In Ref. 1; AAA73393/AAA73394 and 2; CAA23891." evidence="15" ref="1 2">
    <original>Y</original>
    <variation>I</variation>
    <location>
        <position position="225"/>
    </location>
</feature>
<feature type="sequence conflict" description="In Ref. 1; AAA73393/AAA73394 and 2; CAA23891." evidence="15" ref="1 2">
    <original>S</original>
    <variation>G</variation>
    <location>
        <position position="303"/>
    </location>
</feature>
<feature type="strand" evidence="19">
    <location>
        <begin position="5"/>
        <end position="8"/>
    </location>
</feature>
<feature type="helix" evidence="18">
    <location>
        <begin position="9"/>
        <end position="17"/>
    </location>
</feature>
<feature type="strand" evidence="19">
    <location>
        <begin position="22"/>
        <end position="24"/>
    </location>
</feature>
<feature type="helix" evidence="18">
    <location>
        <begin position="25"/>
        <end position="40"/>
    </location>
</feature>
<feature type="turn" evidence="18">
    <location>
        <begin position="41"/>
        <end position="43"/>
    </location>
</feature>
<feature type="helix" evidence="18">
    <location>
        <begin position="46"/>
        <end position="49"/>
    </location>
</feature>
<feature type="turn" evidence="18">
    <location>
        <begin position="50"/>
        <end position="52"/>
    </location>
</feature>
<feature type="helix" evidence="18">
    <location>
        <begin position="54"/>
        <end position="64"/>
    </location>
</feature>
<feature type="helix" evidence="18">
    <location>
        <begin position="71"/>
        <end position="86"/>
    </location>
</feature>
<feature type="strand" evidence="18">
    <location>
        <begin position="92"/>
        <end position="103"/>
    </location>
</feature>
<feature type="helix" evidence="18">
    <location>
        <begin position="106"/>
        <end position="110"/>
    </location>
</feature>
<feature type="strand" evidence="18">
    <location>
        <begin position="114"/>
        <end position="116"/>
    </location>
</feature>
<feature type="strand" evidence="18">
    <location>
        <begin position="122"/>
        <end position="133"/>
    </location>
</feature>
<feature type="turn" evidence="18">
    <location>
        <begin position="134"/>
        <end position="136"/>
    </location>
</feature>
<feature type="strand" evidence="18">
    <location>
        <begin position="139"/>
        <end position="148"/>
    </location>
</feature>
<feature type="helix" evidence="18">
    <location>
        <begin position="154"/>
        <end position="156"/>
    </location>
</feature>
<feature type="helix" evidence="18">
    <location>
        <begin position="161"/>
        <end position="163"/>
    </location>
</feature>
<feature type="helix" evidence="18">
    <location>
        <begin position="164"/>
        <end position="176"/>
    </location>
</feature>
<feature type="helix" evidence="18">
    <location>
        <begin position="177"/>
        <end position="182"/>
    </location>
</feature>
<feature type="strand" evidence="18">
    <location>
        <begin position="183"/>
        <end position="187"/>
    </location>
</feature>
<feature type="helix" evidence="18">
    <location>
        <begin position="189"/>
        <end position="191"/>
    </location>
</feature>
<feature type="helix" evidence="18">
    <location>
        <begin position="194"/>
        <end position="202"/>
    </location>
</feature>
<feature type="strand" evidence="18">
    <location>
        <begin position="206"/>
        <end position="210"/>
    </location>
</feature>
<feature type="turn" evidence="18">
    <location>
        <begin position="218"/>
        <end position="220"/>
    </location>
</feature>
<feature type="helix" evidence="18">
    <location>
        <begin position="224"/>
        <end position="229"/>
    </location>
</feature>
<feature type="strand" evidence="18">
    <location>
        <begin position="235"/>
        <end position="241"/>
    </location>
</feature>
<feature type="strand" evidence="18">
    <location>
        <begin position="244"/>
        <end position="247"/>
    </location>
</feature>
<feature type="strand" evidence="18">
    <location>
        <begin position="253"/>
        <end position="256"/>
    </location>
</feature>
<feature type="strand" evidence="18">
    <location>
        <begin position="259"/>
        <end position="272"/>
    </location>
</feature>
<feature type="helix" evidence="18">
    <location>
        <begin position="274"/>
        <end position="276"/>
    </location>
</feature>
<feature type="strand" evidence="18">
    <location>
        <begin position="277"/>
        <end position="288"/>
    </location>
</feature>
<feature type="strand" evidence="18">
    <location>
        <begin position="291"/>
        <end position="293"/>
    </location>
</feature>
<feature type="strand" evidence="18">
    <location>
        <begin position="297"/>
        <end position="304"/>
    </location>
</feature>
<feature type="helix" evidence="18">
    <location>
        <begin position="309"/>
        <end position="320"/>
    </location>
</feature>
<feature type="helix" evidence="18">
    <location>
        <begin position="323"/>
        <end position="333"/>
    </location>
</feature>
<feature type="turn" evidence="18">
    <location>
        <begin position="334"/>
        <end position="336"/>
    </location>
</feature>
<feature type="helix" evidence="18">
    <location>
        <begin position="338"/>
        <end position="340"/>
    </location>
</feature>
<feature type="helix" evidence="18">
    <location>
        <begin position="346"/>
        <end position="370"/>
    </location>
</feature>
<feature type="helix" evidence="16">
    <location>
        <begin position="382"/>
        <end position="388"/>
    </location>
</feature>
<feature type="helix" evidence="18">
    <location>
        <begin position="393"/>
        <end position="395"/>
    </location>
</feature>
<feature type="helix" evidence="18">
    <location>
        <begin position="399"/>
        <end position="409"/>
    </location>
</feature>
<feature type="turn" evidence="18">
    <location>
        <begin position="410"/>
        <end position="412"/>
    </location>
</feature>
<feature type="strand" evidence="16">
    <location>
        <begin position="414"/>
        <end position="416"/>
    </location>
</feature>
<feature type="strand" evidence="17">
    <location>
        <begin position="419"/>
        <end position="421"/>
    </location>
</feature>
<feature type="helix" evidence="18">
    <location>
        <begin position="422"/>
        <end position="432"/>
    </location>
</feature>
<feature type="strand" evidence="16">
    <location>
        <begin position="438"/>
        <end position="440"/>
    </location>
</feature>
<feature type="helix" evidence="18">
    <location>
        <begin position="446"/>
        <end position="471"/>
    </location>
</feature>
<evidence type="ECO:0000269" key="1">
    <source>
    </source>
</evidence>
<evidence type="ECO:0000269" key="2">
    <source>
    </source>
</evidence>
<evidence type="ECO:0000269" key="3">
    <source>
    </source>
</evidence>
<evidence type="ECO:0000269" key="4">
    <source>
    </source>
</evidence>
<evidence type="ECO:0000269" key="5">
    <source>
    </source>
</evidence>
<evidence type="ECO:0000269" key="6">
    <source>
    </source>
</evidence>
<evidence type="ECO:0000269" key="7">
    <source>
    </source>
</evidence>
<evidence type="ECO:0000269" key="8">
    <source>
    </source>
</evidence>
<evidence type="ECO:0000269" key="9">
    <source>
    </source>
</evidence>
<evidence type="ECO:0000269" key="10">
    <source>
    </source>
</evidence>
<evidence type="ECO:0000269" key="11">
    <source>
    </source>
</evidence>
<evidence type="ECO:0000269" key="12">
    <source>
    </source>
</evidence>
<evidence type="ECO:0000269" key="13">
    <source>
    </source>
</evidence>
<evidence type="ECO:0000269" key="14">
    <source>
    </source>
</evidence>
<evidence type="ECO:0000305" key="15"/>
<evidence type="ECO:0007829" key="16">
    <source>
        <dbReference type="PDB" id="1B7E"/>
    </source>
</evidence>
<evidence type="ECO:0007829" key="17">
    <source>
        <dbReference type="PDB" id="1MM8"/>
    </source>
</evidence>
<evidence type="ECO:0007829" key="18">
    <source>
        <dbReference type="PDB" id="1MUS"/>
    </source>
</evidence>
<evidence type="ECO:0007829" key="19">
    <source>
        <dbReference type="PDB" id="3ECP"/>
    </source>
</evidence>
<organism>
    <name type="scientific">Escherichia coli</name>
    <dbReference type="NCBI Taxonomy" id="562"/>
    <lineage>
        <taxon>Bacteria</taxon>
        <taxon>Pseudomonadati</taxon>
        <taxon>Pseudomonadota</taxon>
        <taxon>Gammaproteobacteria</taxon>
        <taxon>Enterobacterales</taxon>
        <taxon>Enterobacteriaceae</taxon>
        <taxon>Escherichia</taxon>
    </lineage>
</organism>
<proteinExistence type="evidence at protein level"/>
<geneLocation type="plasmid">
    <name>pO86A1</name>
</geneLocation>
<comment type="function">
    <text evidence="3 5 6 9 10 11 12 13">Mediates transposition of transposon Tn5 by a 'cut and paste' mechanism. First, the monomeric transposase binds the 19 bp inverted DNA repeats flanking the transposon. Then, dimerization of the DNA-bound transposase creates a synaptic DNA complex. After nicking of the first DNA strand, excision of the transposon proceeds through a series of intermediates. The transposase then mediates the insertion of the transposon at a new site by strand transfer. The activity of the wild-type transposase is very low, and is further inhibited by dimerization with the transposase inhibitor (inh).</text>
</comment>
<comment type="cofactor">
    <cofactor evidence="1 4 7">
        <name>Mg(2+)</name>
        <dbReference type="ChEBI" id="CHEBI:18420"/>
    </cofactor>
    <text evidence="1 4 7">Binds 2 magnesium ions per subunit.</text>
</comment>
<comment type="subunit">
    <text evidence="1 4 5 7 12 13">Monomer. Homodimer of tnp (isoform 1), and heterodimer of tnp (isoform 1) and inh (isoform 2).</text>
</comment>
<comment type="alternative products">
    <event type="alternative promoter"/>
    <isoform>
        <id>Q46731-1</id>
        <name>1</name>
        <name>Transposase</name>
        <name>Tnp</name>
        <sequence type="displayed"/>
    </isoform>
    <isoform>
        <id>Q46731-2</id>
        <name>2</name>
        <name>Transposition inhibitor</name>
        <name>Inh</name>
        <sequence type="described" ref="VSP_035522"/>
    </isoform>
</comment>
<comment type="miscellaneous">
    <text>Tn5 is a bacterial transposon that contains three genes conferring resistance to the antibiotics kanamycin/neomycin, bleomycin and streptomycin, flanked by two IS50 elements. IS50R codes for the functional transposase (isoform 1) and for the transposition inhibitor (isoform 2). IS50L differs by one nucleotide, giving rise to an ochre stop codon and producing C-terminally truncated proteins that lack transposase activity.</text>
</comment>
<comment type="miscellaneous">
    <molecule>Isoform 2</molecule>
    <text evidence="15">Expressed at 4 times higher levels than isoform 1.</text>
</comment>
<comment type="similarity">
    <text evidence="15">Belongs to the transposase 11 family.</text>
</comment>
<comment type="sequence caution" evidence="15">
    <conflict type="erroneous initiation">
        <sequence resource="EMBL-CDS" id="BAF34032"/>
    </conflict>
</comment>
<sequence length="476" mass="53306">MITSALHRAADWAKSVFSSAALGDPRRTARLVNVAAQLAKYSGKSITISSEGSEAMQEGAYRFIRNPNVSAEAIRKAGAMQTVKLAQEFPELLAIEDTTSLSYRHQVAEELGKLGSIQDKSRGWWVHSVLLLEATTFRTVGLLHQEWWMRPDDPADADEKESGKWLAAAATSRLRMGSMMSNVIAVCDREADIHAYLQDKLAHNERFVVRSKHPRKDVESGLYLYDHLKNQPELGGYQISIPQKGVVDKRGKRKNRPARKASLSLRSGRITLKQGNITLNAVLAEEINPPKGETPLKWLLLTSEPVESLAQALRVIDIYTHRWRIEEFHKAWKTGAGAERQRMEEPDNLERMVSILSFVAVRLLQLRESFTLPQALRAQGLLKEAEHVESQSAETVLTPDECQLLGYLDKGKRKRKEKAGSLQWAYMAIARLGGFMDSKRTGIASWGALWEGWEALQSKLDGFLAAKDLMAQGIKI</sequence>
<dbReference type="EC" id="3.1.-.-"/>
<dbReference type="EMBL" id="U00004">
    <property type="protein sequence ID" value="AAA73393.1"/>
    <property type="molecule type" value="Genomic_DNA"/>
</dbReference>
<dbReference type="EMBL" id="U00004">
    <property type="protein sequence ID" value="AAA73394.1"/>
    <property type="molecule type" value="Genomic_DNA"/>
</dbReference>
<dbReference type="EMBL" id="V00617">
    <property type="protein sequence ID" value="CAA23891.1"/>
    <property type="molecule type" value="Genomic_DNA"/>
</dbReference>
<dbReference type="EMBL" id="U15573">
    <property type="protein sequence ID" value="AAB60064.1"/>
    <property type="molecule type" value="Genomic_DNA"/>
</dbReference>
<dbReference type="EMBL" id="AB255435">
    <property type="protein sequence ID" value="BAF34032.1"/>
    <property type="status" value="ALT_INIT"/>
    <property type="molecule type" value="Genomic_DNA"/>
</dbReference>
<dbReference type="RefSeq" id="WP_000633033.1">
    <property type="nucleotide sequence ID" value="NZ_RRGJ01000093.1"/>
</dbReference>
<dbReference type="RefSeq" id="YP_788129.1">
    <property type="nucleotide sequence ID" value="NC_008460.1"/>
</dbReference>
<dbReference type="PDB" id="1B7E">
    <property type="method" value="X-ray"/>
    <property type="resolution" value="2.90 A"/>
    <property type="chains" value="A=56-476"/>
</dbReference>
<dbReference type="PDB" id="1MM8">
    <property type="method" value="X-ray"/>
    <property type="resolution" value="2.80 A"/>
    <property type="chains" value="A=1-476"/>
</dbReference>
<dbReference type="PDB" id="1MUH">
    <property type="method" value="X-ray"/>
    <property type="resolution" value="2.30 A"/>
    <property type="chains" value="A=1-476"/>
</dbReference>
<dbReference type="PDB" id="1MUS">
    <property type="method" value="X-ray"/>
    <property type="resolution" value="1.90 A"/>
    <property type="chains" value="A=1-476"/>
</dbReference>
<dbReference type="PDB" id="3ECP">
    <property type="method" value="X-ray"/>
    <property type="resolution" value="2.50 A"/>
    <property type="chains" value="A=1-476"/>
</dbReference>
<dbReference type="PDB" id="4DM0">
    <property type="method" value="X-ray"/>
    <property type="resolution" value="2.50 A"/>
    <property type="chains" value="A=1-476"/>
</dbReference>
<dbReference type="PDBsum" id="1B7E"/>
<dbReference type="PDBsum" id="1MM8"/>
<dbReference type="PDBsum" id="1MUH"/>
<dbReference type="PDBsum" id="1MUS"/>
<dbReference type="PDBsum" id="3ECP"/>
<dbReference type="PDBsum" id="4DM0"/>
<dbReference type="SMR" id="Q46731"/>
<dbReference type="DIP" id="DIP-17010N"/>
<dbReference type="BRENDA" id="2.7.7.B22">
    <property type="organism ID" value="2026"/>
</dbReference>
<dbReference type="EvolutionaryTrace" id="Q46731"/>
<dbReference type="GO" id="GO:0003677">
    <property type="term" value="F:DNA binding"/>
    <property type="evidence" value="ECO:0007669"/>
    <property type="project" value="UniProtKB-KW"/>
</dbReference>
<dbReference type="GO" id="GO:0004519">
    <property type="term" value="F:endonuclease activity"/>
    <property type="evidence" value="ECO:0007669"/>
    <property type="project" value="UniProtKB-KW"/>
</dbReference>
<dbReference type="GO" id="GO:0046872">
    <property type="term" value="F:metal ion binding"/>
    <property type="evidence" value="ECO:0007669"/>
    <property type="project" value="UniProtKB-KW"/>
</dbReference>
<dbReference type="GO" id="GO:0004803">
    <property type="term" value="F:transposase activity"/>
    <property type="evidence" value="ECO:0007669"/>
    <property type="project" value="InterPro"/>
</dbReference>
<dbReference type="GO" id="GO:0006313">
    <property type="term" value="P:DNA transposition"/>
    <property type="evidence" value="ECO:0007669"/>
    <property type="project" value="InterPro"/>
</dbReference>
<dbReference type="Gene3D" id="1.10.246.40">
    <property type="entry name" value="Tn5 transposase, domain 1"/>
    <property type="match status" value="1"/>
</dbReference>
<dbReference type="Gene3D" id="1.10.740.10">
    <property type="entry name" value="Transferase Inhibitor Protein From Tn5, Chain"/>
    <property type="match status" value="1"/>
</dbReference>
<dbReference type="Gene3D" id="3.90.350.10">
    <property type="entry name" value="Transposase Inhibitor Protein From Tn5, Chain A, domain 1"/>
    <property type="match status" value="1"/>
</dbReference>
<dbReference type="InterPro" id="IPR012337">
    <property type="entry name" value="RNaseH-like_sf"/>
</dbReference>
<dbReference type="InterPro" id="IPR038215">
    <property type="entry name" value="TN5-like_N_sf"/>
</dbReference>
<dbReference type="InterPro" id="IPR054836">
    <property type="entry name" value="Tn5_transposase"/>
</dbReference>
<dbReference type="InterPro" id="IPR047768">
    <property type="entry name" value="Tn5p-like"/>
</dbReference>
<dbReference type="InterPro" id="IPR002559">
    <property type="entry name" value="Transposase_11"/>
</dbReference>
<dbReference type="InterPro" id="IPR014737">
    <property type="entry name" value="Transposase_Tn5-like_C"/>
</dbReference>
<dbReference type="InterPro" id="IPR014735">
    <property type="entry name" value="Transposase_Tn5-like_N"/>
</dbReference>
<dbReference type="NCBIfam" id="NF033590">
    <property type="entry name" value="transpos_IS4_3"/>
    <property type="match status" value="1"/>
</dbReference>
<dbReference type="PANTHER" id="PTHR37319">
    <property type="entry name" value="TRANSPOSASE"/>
    <property type="match status" value="1"/>
</dbReference>
<dbReference type="PANTHER" id="PTHR37319:SF1">
    <property type="entry name" value="TRANSPOSASE TN5 DIMERISATION DOMAIN-CONTAINING PROTEIN"/>
    <property type="match status" value="1"/>
</dbReference>
<dbReference type="Pfam" id="PF01609">
    <property type="entry name" value="DDE_Tnp_1"/>
    <property type="match status" value="1"/>
</dbReference>
<dbReference type="Pfam" id="PF14706">
    <property type="entry name" value="Tnp_DNA_bind"/>
    <property type="match status" value="1"/>
</dbReference>
<dbReference type="SUPFAM" id="SSF53098">
    <property type="entry name" value="Ribonuclease H-like"/>
    <property type="match status" value="1"/>
</dbReference>